<evidence type="ECO:0000250" key="1"/>
<evidence type="ECO:0000250" key="2">
    <source>
        <dbReference type="UniProtKB" id="P18893"/>
    </source>
</evidence>
<evidence type="ECO:0000250" key="3">
    <source>
        <dbReference type="UniProtKB" id="P22301"/>
    </source>
</evidence>
<evidence type="ECO:0000255" key="4"/>
<evidence type="ECO:0000305" key="5"/>
<keyword id="KW-0202">Cytokine</keyword>
<keyword id="KW-1015">Disulfide bond</keyword>
<keyword id="KW-0325">Glycoprotein</keyword>
<keyword id="KW-0964">Secreted</keyword>
<keyword id="KW-0732">Signal</keyword>
<name>IL10_CEREL</name>
<protein>
    <recommendedName>
        <fullName>Interleukin-10</fullName>
        <shortName>IL-10</shortName>
    </recommendedName>
    <alternativeName>
        <fullName>Cytokine synthesis inhibitory factor</fullName>
        <shortName>CSIF</shortName>
    </alternativeName>
</protein>
<proteinExistence type="evidence at transcript level"/>
<reference key="1">
    <citation type="journal article" date="1995" name="DNA Seq.">
        <title>The cloning and sequencing of cervine interleukin 10.</title>
        <authorList>
            <person name="Lockhart E."/>
            <person name="Slobbe L."/>
            <person name="Droogmans L."/>
            <person name="Griffin F."/>
            <person name="Buchan G."/>
        </authorList>
    </citation>
    <scope>NUCLEOTIDE SEQUENCE [MRNA]</scope>
</reference>
<organism>
    <name type="scientific">Cervus elaphus</name>
    <name type="common">Red deer</name>
    <dbReference type="NCBI Taxonomy" id="9860"/>
    <lineage>
        <taxon>Eukaryota</taxon>
        <taxon>Metazoa</taxon>
        <taxon>Chordata</taxon>
        <taxon>Craniata</taxon>
        <taxon>Vertebrata</taxon>
        <taxon>Euteleostomi</taxon>
        <taxon>Mammalia</taxon>
        <taxon>Eutheria</taxon>
        <taxon>Laurasiatheria</taxon>
        <taxon>Artiodactyla</taxon>
        <taxon>Ruminantia</taxon>
        <taxon>Pecora</taxon>
        <taxon>Cervidae</taxon>
        <taxon>Cervinae</taxon>
        <taxon>Cervus</taxon>
    </lineage>
</organism>
<feature type="signal peptide" evidence="4">
    <location>
        <begin position="1"/>
        <end position="19"/>
    </location>
</feature>
<feature type="chain" id="PRO_0000015356" description="Interleukin-10">
    <location>
        <begin position="20"/>
        <end position="179"/>
    </location>
</feature>
<feature type="glycosylation site" description="N-linked (GlcNAc...) asparagine" evidence="4">
    <location>
        <position position="135"/>
    </location>
</feature>
<feature type="disulfide bond" evidence="1">
    <location>
        <begin position="31"/>
        <end position="127"/>
    </location>
</feature>
<feature type="disulfide bond" evidence="1">
    <location>
        <begin position="81"/>
        <end position="133"/>
    </location>
</feature>
<comment type="function">
    <text evidence="2 3">Major immune regulatory cytokine that acts on many cells of the immune system where it has profound anti-inflammatory functions, limiting excessive tissue disruption caused by inflammation. Mechanistically, IL10 binds to its heterotetrameric receptor comprising IL10RA and IL10RB leading to JAK1 and STAT2-mediated phosphorylation of STAT3. In turn, STAT3 translocates to the nucleus where it drives expression of anti-inflammatory mediators. Targets antigen-presenting cells (APCs) such as macrophages and monocytes and inhibits their release of pro-inflammatory cytokines including granulocyte-macrophage colony-stimulating factor /GM-CSF, granulocyte colony-stimulating factor/G-CSF, IL-1 alpha, IL-1 beta, IL-6, IL-8 and TNF-alpha. Also interferes with antigen presentation by reducing the expression of MHC-class II and co-stimulatory molecules, thereby inhibiting their ability to induce T cell activation (By similarity). In addition, controls the inflammatory response of macrophages by reprogramming essential metabolic pathways including mTOR signaling (By similarity).</text>
</comment>
<comment type="subunit">
    <text evidence="3">Homodimer. Interacts with IL10RA and IL10RB.</text>
</comment>
<comment type="subcellular location">
    <subcellularLocation>
        <location evidence="3">Secreted</location>
    </subcellularLocation>
</comment>
<comment type="similarity">
    <text evidence="5">Belongs to the IL-10 family.</text>
</comment>
<sequence length="179" mass="20467">MPSSSALLCCLVFLAGVAASRDASAPSDSSCTHFSNSLPLMLRELRTAFSRVKNFFQMKDQLDSMLLTQSLLDDFKGYLGCQALSEMIQFYLEEVMPQAENHGPEIKEHVNSLGEKLKTLRLRLRRCHRFLPCENKSKAVEQVKSVFSKLQERGVYKAMSEFDIFINYIETYTTMKMKN</sequence>
<dbReference type="EMBL" id="U11767">
    <property type="protein sequence ID" value="AAA85434.1"/>
    <property type="molecule type" value="mRNA"/>
</dbReference>
<dbReference type="SMR" id="P51746"/>
<dbReference type="GlyCosmos" id="P51746">
    <property type="glycosylation" value="1 site, No reported glycans"/>
</dbReference>
<dbReference type="GO" id="GO:0005576">
    <property type="term" value="C:extracellular region"/>
    <property type="evidence" value="ECO:0000303"/>
    <property type="project" value="UniProtKB"/>
</dbReference>
<dbReference type="GO" id="GO:0005615">
    <property type="term" value="C:extracellular space"/>
    <property type="evidence" value="ECO:0000250"/>
    <property type="project" value="UniProtKB"/>
</dbReference>
<dbReference type="GO" id="GO:0005125">
    <property type="term" value="F:cytokine activity"/>
    <property type="evidence" value="ECO:0007669"/>
    <property type="project" value="UniProtKB-KW"/>
</dbReference>
<dbReference type="GO" id="GO:0005141">
    <property type="term" value="F:interleukin-10 receptor binding"/>
    <property type="evidence" value="ECO:0000303"/>
    <property type="project" value="UniProtKB"/>
</dbReference>
<dbReference type="GO" id="GO:0006955">
    <property type="term" value="P:immune response"/>
    <property type="evidence" value="ECO:0007669"/>
    <property type="project" value="InterPro"/>
</dbReference>
<dbReference type="GO" id="GO:0030889">
    <property type="term" value="P:negative regulation of B cell proliferation"/>
    <property type="evidence" value="ECO:0000250"/>
    <property type="project" value="UniProtKB"/>
</dbReference>
<dbReference type="GO" id="GO:0002719">
    <property type="term" value="P:negative regulation of cytokine production involved in immune response"/>
    <property type="evidence" value="ECO:0000250"/>
    <property type="project" value="UniProtKB"/>
</dbReference>
<dbReference type="GO" id="GO:0050728">
    <property type="term" value="P:negative regulation of inflammatory response"/>
    <property type="evidence" value="ECO:0000250"/>
    <property type="project" value="UniProtKB"/>
</dbReference>
<dbReference type="GO" id="GO:0032715">
    <property type="term" value="P:negative regulation of interleukin-6 production"/>
    <property type="evidence" value="ECO:0000250"/>
    <property type="project" value="UniProtKB"/>
</dbReference>
<dbReference type="GO" id="GO:0051045">
    <property type="term" value="P:negative regulation of membrane protein ectodomain proteolysis"/>
    <property type="evidence" value="ECO:0000250"/>
    <property type="project" value="UniProtKB"/>
</dbReference>
<dbReference type="GO" id="GO:0002904">
    <property type="term" value="P:positive regulation of B cell apoptotic process"/>
    <property type="evidence" value="ECO:0000250"/>
    <property type="project" value="UniProtKB"/>
</dbReference>
<dbReference type="GO" id="GO:0001819">
    <property type="term" value="P:positive regulation of cytokine production"/>
    <property type="evidence" value="ECO:0000250"/>
    <property type="project" value="UniProtKB"/>
</dbReference>
<dbReference type="GO" id="GO:0051091">
    <property type="term" value="P:positive regulation of DNA-binding transcription factor activity"/>
    <property type="evidence" value="ECO:0000250"/>
    <property type="project" value="UniProtKB"/>
</dbReference>
<dbReference type="GO" id="GO:0045893">
    <property type="term" value="P:positive regulation of DNA-templated transcription"/>
    <property type="evidence" value="ECO:0000250"/>
    <property type="project" value="UniProtKB"/>
</dbReference>
<dbReference type="GO" id="GO:0051384">
    <property type="term" value="P:response to glucocorticoid"/>
    <property type="evidence" value="ECO:0000250"/>
    <property type="project" value="UniProtKB"/>
</dbReference>
<dbReference type="GO" id="GO:0002237">
    <property type="term" value="P:response to molecule of bacterial origin"/>
    <property type="evidence" value="ECO:0000250"/>
    <property type="project" value="UniProtKB"/>
</dbReference>
<dbReference type="FunFam" id="1.20.1250.10:FF:000011">
    <property type="entry name" value="Interleukin-10"/>
    <property type="match status" value="1"/>
</dbReference>
<dbReference type="Gene3D" id="1.20.1250.10">
    <property type="match status" value="1"/>
</dbReference>
<dbReference type="InterPro" id="IPR009079">
    <property type="entry name" value="4_helix_cytokine-like_core"/>
</dbReference>
<dbReference type="InterPro" id="IPR000098">
    <property type="entry name" value="IL-10"/>
</dbReference>
<dbReference type="InterPro" id="IPR020443">
    <property type="entry name" value="IL-10/19/20/24/26"/>
</dbReference>
<dbReference type="InterPro" id="IPR020423">
    <property type="entry name" value="IL-10_CS"/>
</dbReference>
<dbReference type="PANTHER" id="PTHR48482:SF5">
    <property type="entry name" value="INTERLEUKIN-10"/>
    <property type="match status" value="1"/>
</dbReference>
<dbReference type="PANTHER" id="PTHR48482">
    <property type="entry name" value="INTERLEUKIN-19-RELATED"/>
    <property type="match status" value="1"/>
</dbReference>
<dbReference type="Pfam" id="PF00726">
    <property type="entry name" value="IL10"/>
    <property type="match status" value="1"/>
</dbReference>
<dbReference type="PRINTS" id="PR01294">
    <property type="entry name" value="INTRLEUKIN10"/>
</dbReference>
<dbReference type="SMART" id="SM00188">
    <property type="entry name" value="IL10"/>
    <property type="match status" value="1"/>
</dbReference>
<dbReference type="SUPFAM" id="SSF47266">
    <property type="entry name" value="4-helical cytokines"/>
    <property type="match status" value="1"/>
</dbReference>
<dbReference type="PROSITE" id="PS00520">
    <property type="entry name" value="INTERLEUKIN_10"/>
    <property type="match status" value="1"/>
</dbReference>
<gene>
    <name type="primary">IL10</name>
</gene>
<accession>P51746</accession>